<proteinExistence type="evidence at protein level"/>
<keyword id="KW-0025">Alternative splicing</keyword>
<keyword id="KW-1003">Cell membrane</keyword>
<keyword id="KW-0963">Cytoplasm</keyword>
<keyword id="KW-0968">Cytoplasmic vesicle</keyword>
<keyword id="KW-0449">Lipoprotein</keyword>
<keyword id="KW-0472">Membrane</keyword>
<keyword id="KW-0519">Myristate</keyword>
<keyword id="KW-0597">Phosphoprotein</keyword>
<keyword id="KW-1185">Reference proteome</keyword>
<comment type="function">
    <text evidence="7 8">Plays a role in the regulation of cell morphology and cytoskeletal organization. Required in the cortical actin filament dynamics and cell shape. May play a role in the control of cell motility and survival of macrophages.</text>
</comment>
<comment type="subunit">
    <text evidence="7 8">Interacts with RAC1, PFN1 and PFN2. Interacts (activated by RAC1) with SRGAP2 (via SH3 domain); regulates the actin filament severing activity of FMNL1.</text>
</comment>
<comment type="interaction">
    <interactant intactId="EBI-772250">
        <id>Q9JL26</id>
    </interactant>
    <interactant intactId="EBI-27033646">
        <id>D0ZIB5</id>
        <label>steC</label>
    </interactant>
    <organismsDiffer>true</organismsDiffer>
    <experiments>6</experiments>
</comment>
<comment type="subcellular location">
    <subcellularLocation>
        <location evidence="1">Cytoplasm</location>
    </subcellularLocation>
    <subcellularLocation>
        <location>Cell membrane</location>
        <topology>Lipid-anchor</topology>
    </subcellularLocation>
    <subcellularLocation>
        <location>Cytoplasmic vesicle</location>
        <location>Phagosome</location>
    </subcellularLocation>
    <text>Recruited to actin-rich phagosomes during phagocytosis. Translocates to the plasma membrane upon activation by RAC1.</text>
</comment>
<comment type="alternative products">
    <event type="alternative splicing"/>
    <isoform>
        <id>Q9JL26-1</id>
        <name>1</name>
        <name>Frlalpha</name>
        <sequence type="displayed"/>
    </isoform>
    <isoform>
        <id>Q9JL26-2</id>
        <name>2</name>
        <name>Frlbeta</name>
        <sequence type="described" ref="VSP_013978 VSP_013979 VSP_013980"/>
    </isoform>
</comment>
<comment type="tissue specificity">
    <text evidence="7">Highly expressed in the spleen, lymph node and bone marrow cells.</text>
</comment>
<comment type="domain">
    <text evidence="1">The DAD domain regulates activation via by an autoinhibitory interaction with the N-terminus. This autoinhibition is released upon competitive binding of an activated GTPase. The release of DAD allows the FH2 domain to then nucleate and elongate nonbranched actin filaments (By similarity).</text>
</comment>
<comment type="PTM">
    <text evidence="1">Myristoylation mediates membrane localization.</text>
</comment>
<comment type="similarity">
    <text evidence="10">Belongs to the formin homology family.</text>
</comment>
<feature type="initiator methionine" description="Removed" evidence="2">
    <location>
        <position position="1"/>
    </location>
</feature>
<feature type="chain" id="PRO_0000194891" description="Formin-like protein 1">
    <location>
        <begin position="2"/>
        <end position="1094"/>
    </location>
</feature>
<feature type="domain" description="GBD/FH3" evidence="4">
    <location>
        <begin position="27"/>
        <end position="464"/>
    </location>
</feature>
<feature type="domain" description="FH2" evidence="5">
    <location>
        <begin position="627"/>
        <end position="1018"/>
    </location>
</feature>
<feature type="domain" description="DAD" evidence="3">
    <location>
        <begin position="1049"/>
        <end position="1082"/>
    </location>
</feature>
<feature type="region of interest" description="Disordered" evidence="6">
    <location>
        <begin position="1"/>
        <end position="29"/>
    </location>
</feature>
<feature type="region of interest" description="Disordered" evidence="6">
    <location>
        <begin position="173"/>
        <end position="199"/>
    </location>
</feature>
<feature type="region of interest" description="Disordered" evidence="6">
    <location>
        <begin position="507"/>
        <end position="627"/>
    </location>
</feature>
<feature type="region of interest" description="Disordered" evidence="6">
    <location>
        <begin position="1002"/>
        <end position="1094"/>
    </location>
</feature>
<feature type="compositionally biased region" description="Pro residues" evidence="6">
    <location>
        <begin position="16"/>
        <end position="28"/>
    </location>
</feature>
<feature type="compositionally biased region" description="Polar residues" evidence="6">
    <location>
        <begin position="519"/>
        <end position="529"/>
    </location>
</feature>
<feature type="compositionally biased region" description="Pro residues" evidence="6">
    <location>
        <begin position="535"/>
        <end position="549"/>
    </location>
</feature>
<feature type="compositionally biased region" description="Pro residues" evidence="6">
    <location>
        <begin position="559"/>
        <end position="610"/>
    </location>
</feature>
<feature type="compositionally biased region" description="Basic and acidic residues" evidence="6">
    <location>
        <begin position="1002"/>
        <end position="1017"/>
    </location>
</feature>
<feature type="modified residue" description="Phosphoserine" evidence="2">
    <location>
        <position position="7"/>
    </location>
</feature>
<feature type="modified residue" description="Phosphoserine" evidence="11 12">
    <location>
        <position position="184"/>
    </location>
</feature>
<feature type="modified residue" description="Phosphoserine" evidence="2">
    <location>
        <position position="688"/>
    </location>
</feature>
<feature type="modified residue" description="Phosphoserine" evidence="2">
    <location>
        <position position="1021"/>
    </location>
</feature>
<feature type="lipid moiety-binding region" description="N-myristoyl glycine" evidence="2">
    <location>
        <position position="2"/>
    </location>
</feature>
<feature type="splice variant" id="VSP_013978" description="In isoform 2." evidence="9">
    <location>
        <begin position="1"/>
        <end position="26"/>
    </location>
</feature>
<feature type="splice variant" id="VSP_013979" description="In isoform 2." evidence="9">
    <original>QPMP</original>
    <variation>MVGT</variation>
    <location>
        <begin position="27"/>
        <end position="30"/>
    </location>
</feature>
<feature type="splice variant" id="VSP_013980" description="In isoform 2." evidence="9">
    <original>DLRNQPYIRADTGRRSARRRPPGPPLPVTTDLAL</original>
    <variation>VLKTVPFTARTGKRTSRLLCEASLGEEMTL</variation>
    <location>
        <begin position="1061"/>
        <end position="1094"/>
    </location>
</feature>
<feature type="sequence conflict" description="In Ref. 1; AAD01273." evidence="10" ref="1">
    <original>K</original>
    <variation>R</variation>
    <location>
        <position position="64"/>
    </location>
</feature>
<feature type="sequence conflict" description="In Ref. 1; AAD01273." evidence="10" ref="1">
    <original>G</original>
    <variation>D</variation>
    <location>
        <position position="94"/>
    </location>
</feature>
<feature type="sequence conflict" description="In Ref. 1; AAD01273." evidence="10" ref="1">
    <original>K</original>
    <variation>R</variation>
    <location>
        <position position="111"/>
    </location>
</feature>
<feature type="sequence conflict" description="In Ref. 1; AAD01273." evidence="10" ref="1">
    <original>S</original>
    <variation>F</variation>
    <location>
        <position position="117"/>
    </location>
</feature>
<feature type="sequence conflict" description="In Ref. 1; AAD01273." evidence="10" ref="1">
    <original>P</original>
    <variation>H</variation>
    <location>
        <position position="581"/>
    </location>
</feature>
<feature type="sequence conflict" description="In Ref. 1; AAD01273." evidence="10" ref="1">
    <original>D</original>
    <variation>N</variation>
    <location>
        <position position="620"/>
    </location>
</feature>
<feature type="sequence conflict" description="In Ref. 1; AAD01273." evidence="10" ref="1">
    <original>F</original>
    <variation>L</variation>
    <location>
        <position position="981"/>
    </location>
</feature>
<name>FMNL1_MOUSE</name>
<sequence length="1094" mass="122060">MGNAAGSAEQPAGPTASPPKQPAVPKQPMPAAGELEERFTRVLNCMNLPPDKVQLLSQYDNEKKWELICDQERFQVKNPPAAYIQKLKSYLDTGGVSRKVASDWMSNLGFKRRVQESTQVLRELETSLRTNHIGWVQEFLNEENRGLDVLLEYLAFAQCSVAYDMESTDSVASGAEKSKPLDQSVEDLSKAPPSSVPKSRLTIKLTPAHSRKALRNSRIVSQKDDVHVCIMCLRAIMNYQSGFSLVMNHPACVNEIALSLNNKSPRTKALVLELLAAVCLVRGGHDIILAAFDNFKEVCGEQHRFEKLMEYFRHEDSNIDFMVACMQFINIVVHSVENMNFRVFLQYEFTHLGLDLYLERLRLTESDKLQVQIQAYLDNVFDVGTLLEETETKNAVLEHMEELQEQVATLTERLRDTENDSMAKIAELEKQLSQARKELETLRERFSESTPMGTSRRIPEPEKVPVPTVVRPSALELKVEELEEKGLIRILRGPGDVVSIEILPGAAATPSGDDAQAPRVSTDSPSTAESIPEAASPPPPPPPPPPPLPNLQSQQEAPPSAPPLAPPLPGCAEPPPAPPLPGDLPPPPPPPPLGTDGPVPPPPPPPPGGPPDILGGQGPDIGPGVKAKKPIQTKFRMPLLNWVALKPSQITGTVFTELNDEKVLQELDMNDFEEHFKTKSQGPCLDISALKGKASQKAPTKTILIEANRAKNLAITLRKGNLGADRICQAIETYDLQTLSLDFLELLTRFLPTDYERSLIARFEKEQRPMEELSEEDRFMLRFSRIQRLPERMNTLTFLGNFPDTAQLLMPQLNAIIAASMSIKSSDKLRQILEIVLAFGNYMNSSKRGAAYGFRLQSLDALLEMKSTDRKQTLLHYLVKVIAEKYPQLTGFHSDLHFLDKAGSVSLDSVLGDVRSLQRGLELTQREFVRQDDCLVLKEFLRANSPTMDKLLADSKTAQEAYESVVEYFGENPKTTSPSMFFSLFSRFTKAYKKAEQEVEQWKKEAAADTSGREEPPTPKSPPKARRQQMDLISELKRKQQKEPLIYESDRDGAIEDIITDLRNQPYIRADTGRRSARRRPPGPPLPVTTDLAL</sequence>
<gene>
    <name type="primary">Fmnl1</name>
    <name type="synonym">Frl</name>
    <name type="synonym">Frl1</name>
</gene>
<protein>
    <recommendedName>
        <fullName>Formin-like protein 1</fullName>
    </recommendedName>
    <alternativeName>
        <fullName>Formin-related protein</fullName>
    </alternativeName>
</protein>
<evidence type="ECO:0000250" key="1"/>
<evidence type="ECO:0000250" key="2">
    <source>
        <dbReference type="UniProtKB" id="O95466"/>
    </source>
</evidence>
<evidence type="ECO:0000255" key="3">
    <source>
        <dbReference type="PROSITE-ProRule" id="PRU00577"/>
    </source>
</evidence>
<evidence type="ECO:0000255" key="4">
    <source>
        <dbReference type="PROSITE-ProRule" id="PRU00579"/>
    </source>
</evidence>
<evidence type="ECO:0000255" key="5">
    <source>
        <dbReference type="PROSITE-ProRule" id="PRU00774"/>
    </source>
</evidence>
<evidence type="ECO:0000256" key="6">
    <source>
        <dbReference type="SAM" id="MobiDB-lite"/>
    </source>
</evidence>
<evidence type="ECO:0000269" key="7">
    <source>
    </source>
</evidence>
<evidence type="ECO:0000269" key="8">
    <source>
    </source>
</evidence>
<evidence type="ECO:0000303" key="9">
    <source>
    </source>
</evidence>
<evidence type="ECO:0000305" key="10"/>
<evidence type="ECO:0007744" key="11">
    <source>
    </source>
</evidence>
<evidence type="ECO:0007744" key="12">
    <source>
    </source>
</evidence>
<reference key="1">
    <citation type="journal article" date="2000" name="Mol. Cell. Biol.">
        <title>FRL, a novel formin-related protein, binds to Rac and regulates cell motility and survival of macrophages.</title>
        <authorList>
            <person name="Yayoshi-Yamamoto S."/>
            <person name="Taniuchi I."/>
            <person name="Watanabe T."/>
        </authorList>
    </citation>
    <scope>NUCLEOTIDE SEQUENCE [MRNA] (ISOFORMS 1 AND 2)</scope>
    <scope>FUNCTION</scope>
    <scope>INTERACTION WITH RAC1; PFN1 AND PFN2</scope>
    <scope>SUBCELLULAR LOCATION</scope>
    <scope>TISSUE SPECIFICITY</scope>
</reference>
<reference key="2">
    <citation type="journal article" date="2004" name="DNA Res.">
        <title>Prediction of the coding sequences of mouse homologues of FLJ genes: the complete nucleotide sequences of 110 mouse FLJ-homologous cDNAs identified by screening of terminal sequences of cDNA clones randomly sampled from size-fractionated libraries.</title>
        <authorList>
            <person name="Okazaki N."/>
            <person name="Kikuno R."/>
            <person name="Ohara R."/>
            <person name="Inamoto S."/>
            <person name="Koseki H."/>
            <person name="Hiraoka S."/>
            <person name="Saga Y."/>
            <person name="Kitamura H."/>
            <person name="Nakagawa T."/>
            <person name="Nagase T."/>
            <person name="Ohara O."/>
            <person name="Koga H."/>
        </authorList>
    </citation>
    <scope>NUCLEOTIDE SEQUENCE [LARGE SCALE MRNA] OF 231-1094</scope>
    <source>
        <tissue>Natural killer cell</tissue>
    </source>
</reference>
<reference key="3">
    <citation type="journal article" date="2009" name="Immunity">
        <title>The phagosomal proteome in interferon-gamma-activated macrophages.</title>
        <authorList>
            <person name="Trost M."/>
            <person name="English L."/>
            <person name="Lemieux S."/>
            <person name="Courcelles M."/>
            <person name="Desjardins M."/>
            <person name="Thibault P."/>
        </authorList>
    </citation>
    <scope>PHOSPHORYLATION [LARGE SCALE ANALYSIS] AT SER-184</scope>
    <scope>IDENTIFICATION BY MASS SPECTROMETRY [LARGE SCALE ANALYSIS]</scope>
</reference>
<reference key="4">
    <citation type="journal article" date="2010" name="Cell">
        <title>A tissue-specific atlas of mouse protein phosphorylation and expression.</title>
        <authorList>
            <person name="Huttlin E.L."/>
            <person name="Jedrychowski M.P."/>
            <person name="Elias J.E."/>
            <person name="Goswami T."/>
            <person name="Rad R."/>
            <person name="Beausoleil S.A."/>
            <person name="Villen J."/>
            <person name="Haas W."/>
            <person name="Sowa M.E."/>
            <person name="Gygi S.P."/>
        </authorList>
    </citation>
    <scope>PHOSPHORYLATION [LARGE SCALE ANALYSIS] AT SER-184</scope>
    <scope>IDENTIFICATION BY MASS SPECTROMETRY [LARGE SCALE ANALYSIS]</scope>
    <source>
        <tissue>Brain</tissue>
        <tissue>Brown adipose tissue</tissue>
        <tissue>Heart</tissue>
        <tissue>Kidney</tissue>
        <tissue>Lung</tissue>
        <tissue>Spleen</tissue>
    </source>
</reference>
<reference key="5">
    <citation type="journal article" date="2011" name="J. Biol. Chem.">
        <title>Bi-modal regulation of a formin by srGAP2.</title>
        <authorList>
            <person name="Mason F.M."/>
            <person name="Heimsath E.G."/>
            <person name="Higgs H.N."/>
            <person name="Soderling S.H."/>
        </authorList>
    </citation>
    <scope>FUNCTION IN ACTIN FILAMENT SEVERING</scope>
    <scope>INTERACTION WITH SRGAP2</scope>
    <scope>SUBCELLULAR LOCATION</scope>
</reference>
<accession>Q9JL26</accession>
<accession>Q6KAN4</accession>
<accession>Q9Z2V7</accession>
<organism>
    <name type="scientific">Mus musculus</name>
    <name type="common">Mouse</name>
    <dbReference type="NCBI Taxonomy" id="10090"/>
    <lineage>
        <taxon>Eukaryota</taxon>
        <taxon>Metazoa</taxon>
        <taxon>Chordata</taxon>
        <taxon>Craniata</taxon>
        <taxon>Vertebrata</taxon>
        <taxon>Euteleostomi</taxon>
        <taxon>Mammalia</taxon>
        <taxon>Eutheria</taxon>
        <taxon>Euarchontoglires</taxon>
        <taxon>Glires</taxon>
        <taxon>Rodentia</taxon>
        <taxon>Myomorpha</taxon>
        <taxon>Muroidea</taxon>
        <taxon>Muridae</taxon>
        <taxon>Murinae</taxon>
        <taxon>Mus</taxon>
        <taxon>Mus</taxon>
    </lineage>
</organism>
<dbReference type="EMBL" id="AF006466">
    <property type="protein sequence ID" value="AAD01273.1"/>
    <property type="molecule type" value="mRNA"/>
</dbReference>
<dbReference type="EMBL" id="AF215666">
    <property type="protein sequence ID" value="AAF25953.1"/>
    <property type="molecule type" value="mRNA"/>
</dbReference>
<dbReference type="EMBL" id="AK131173">
    <property type="protein sequence ID" value="BAD21423.1"/>
    <property type="molecule type" value="mRNA"/>
</dbReference>
<dbReference type="CCDS" id="CCDS36348.1">
    <molecule id="Q9JL26-1"/>
</dbReference>
<dbReference type="PIR" id="T13963">
    <property type="entry name" value="T13963"/>
</dbReference>
<dbReference type="RefSeq" id="NP_001071166.1">
    <molecule id="Q9JL26-1"/>
    <property type="nucleotide sequence ID" value="NM_001077698.2"/>
</dbReference>
<dbReference type="RefSeq" id="NP_062653.2">
    <property type="nucleotide sequence ID" value="NM_019679.2"/>
</dbReference>
<dbReference type="SMR" id="Q9JL26"/>
<dbReference type="BioGRID" id="208325">
    <property type="interactions" value="21"/>
</dbReference>
<dbReference type="FunCoup" id="Q9JL26">
    <property type="interactions" value="1181"/>
</dbReference>
<dbReference type="IntAct" id="Q9JL26">
    <property type="interactions" value="4"/>
</dbReference>
<dbReference type="MINT" id="Q9JL26"/>
<dbReference type="STRING" id="10090.ENSMUSP00000046296"/>
<dbReference type="GlyGen" id="Q9JL26">
    <property type="glycosylation" value="2 sites"/>
</dbReference>
<dbReference type="iPTMnet" id="Q9JL26"/>
<dbReference type="PhosphoSitePlus" id="Q9JL26"/>
<dbReference type="SwissPalm" id="Q9JL26"/>
<dbReference type="jPOST" id="Q9JL26"/>
<dbReference type="PaxDb" id="10090-ENSMUSP00000046296"/>
<dbReference type="PeptideAtlas" id="Q9JL26"/>
<dbReference type="ProteomicsDB" id="267368">
    <molecule id="Q9JL26-1"/>
</dbReference>
<dbReference type="ProteomicsDB" id="267369">
    <molecule id="Q9JL26-2"/>
</dbReference>
<dbReference type="Antibodypedia" id="17595">
    <property type="antibodies" value="177 antibodies from 32 providers"/>
</dbReference>
<dbReference type="DNASU" id="57778"/>
<dbReference type="Ensembl" id="ENSMUST00000042286.12">
    <molecule id="Q9JL26-1"/>
    <property type="protein sequence ID" value="ENSMUSP00000046296.6"/>
    <property type="gene ID" value="ENSMUSG00000055805.16"/>
</dbReference>
<dbReference type="GeneID" id="57778"/>
<dbReference type="KEGG" id="mmu:57778"/>
<dbReference type="UCSC" id="uc007ltv.1">
    <molecule id="Q9JL26-1"/>
    <property type="organism name" value="mouse"/>
</dbReference>
<dbReference type="AGR" id="MGI:1888994"/>
<dbReference type="CTD" id="752"/>
<dbReference type="MGI" id="MGI:1888994">
    <property type="gene designation" value="Fmnl1"/>
</dbReference>
<dbReference type="VEuPathDB" id="HostDB:ENSMUSG00000055805"/>
<dbReference type="eggNOG" id="KOG1923">
    <property type="taxonomic scope" value="Eukaryota"/>
</dbReference>
<dbReference type="GeneTree" id="ENSGT00940000156292"/>
<dbReference type="HOGENOM" id="CLU_003597_0_0_1"/>
<dbReference type="InParanoid" id="Q9JL26"/>
<dbReference type="PhylomeDB" id="Q9JL26"/>
<dbReference type="TreeFam" id="TF325155"/>
<dbReference type="Reactome" id="R-MMU-5663220">
    <property type="pathway name" value="RHO GTPases Activate Formins"/>
</dbReference>
<dbReference type="Reactome" id="R-MMU-9013149">
    <property type="pathway name" value="RAC1 GTPase cycle"/>
</dbReference>
<dbReference type="BioGRID-ORCS" id="57778">
    <property type="hits" value="2 hits in 76 CRISPR screens"/>
</dbReference>
<dbReference type="CD-CODE" id="CE726F99">
    <property type="entry name" value="Postsynaptic density"/>
</dbReference>
<dbReference type="ChiTaRS" id="Fmnl1">
    <property type="organism name" value="mouse"/>
</dbReference>
<dbReference type="PRO" id="PR:Q9JL26"/>
<dbReference type="Proteomes" id="UP000000589">
    <property type="component" value="Chromosome 11"/>
</dbReference>
<dbReference type="RNAct" id="Q9JL26">
    <property type="molecule type" value="protein"/>
</dbReference>
<dbReference type="Bgee" id="ENSMUSG00000055805">
    <property type="expression patterns" value="Expressed in granulocyte and 82 other cell types or tissues"/>
</dbReference>
<dbReference type="ExpressionAtlas" id="Q9JL26">
    <property type="expression patterns" value="baseline and differential"/>
</dbReference>
<dbReference type="GO" id="GO:0005829">
    <property type="term" value="C:cytosol"/>
    <property type="evidence" value="ECO:0000314"/>
    <property type="project" value="UniProtKB"/>
</dbReference>
<dbReference type="GO" id="GO:0045335">
    <property type="term" value="C:phagocytic vesicle"/>
    <property type="evidence" value="ECO:0000314"/>
    <property type="project" value="UniProtKB"/>
</dbReference>
<dbReference type="GO" id="GO:0005886">
    <property type="term" value="C:plasma membrane"/>
    <property type="evidence" value="ECO:0000314"/>
    <property type="project" value="UniProtKB"/>
</dbReference>
<dbReference type="GO" id="GO:0051015">
    <property type="term" value="F:actin filament binding"/>
    <property type="evidence" value="ECO:0000314"/>
    <property type="project" value="UniProtKB"/>
</dbReference>
<dbReference type="GO" id="GO:0032794">
    <property type="term" value="F:GTPase activating protein binding"/>
    <property type="evidence" value="ECO:0000314"/>
    <property type="project" value="UniProtKB"/>
</dbReference>
<dbReference type="GO" id="GO:0005522">
    <property type="term" value="F:profilin binding"/>
    <property type="evidence" value="ECO:0000314"/>
    <property type="project" value="MGI"/>
</dbReference>
<dbReference type="GO" id="GO:0031267">
    <property type="term" value="F:small GTPase binding"/>
    <property type="evidence" value="ECO:0000314"/>
    <property type="project" value="UniProtKB"/>
</dbReference>
<dbReference type="GO" id="GO:0051014">
    <property type="term" value="P:actin filament severing"/>
    <property type="evidence" value="ECO:0000314"/>
    <property type="project" value="UniProtKB"/>
</dbReference>
<dbReference type="GO" id="GO:0030866">
    <property type="term" value="P:cortical actin cytoskeleton organization"/>
    <property type="evidence" value="ECO:0000250"/>
    <property type="project" value="UniProtKB"/>
</dbReference>
<dbReference type="GO" id="GO:0008360">
    <property type="term" value="P:regulation of cell shape"/>
    <property type="evidence" value="ECO:0000250"/>
    <property type="project" value="UniProtKB"/>
</dbReference>
<dbReference type="GO" id="GO:0006929">
    <property type="term" value="P:substrate-dependent cell migration"/>
    <property type="evidence" value="ECO:0000315"/>
    <property type="project" value="MGI"/>
</dbReference>
<dbReference type="FunFam" id="1.20.58.2220:FF:000001">
    <property type="entry name" value="Formin-like 1, isoform CRA_c"/>
    <property type="match status" value="1"/>
</dbReference>
<dbReference type="FunFam" id="1.25.10.10:FF:000036">
    <property type="entry name" value="Formin-like protein 3 isoform 1"/>
    <property type="match status" value="1"/>
</dbReference>
<dbReference type="FunFam" id="1.25.10.10:FF:000045">
    <property type="entry name" value="Formin-like protein 3 isoform 1"/>
    <property type="match status" value="1"/>
</dbReference>
<dbReference type="Gene3D" id="1.20.58.2220">
    <property type="entry name" value="Formin, FH2 domain"/>
    <property type="match status" value="1"/>
</dbReference>
<dbReference type="Gene3D" id="1.25.10.10">
    <property type="entry name" value="Leucine-rich Repeat Variant"/>
    <property type="match status" value="1"/>
</dbReference>
<dbReference type="InterPro" id="IPR011989">
    <property type="entry name" value="ARM-like"/>
</dbReference>
<dbReference type="InterPro" id="IPR016024">
    <property type="entry name" value="ARM-type_fold"/>
</dbReference>
<dbReference type="InterPro" id="IPR014767">
    <property type="entry name" value="DAD_dom"/>
</dbReference>
<dbReference type="InterPro" id="IPR015425">
    <property type="entry name" value="FH2_Formin"/>
</dbReference>
<dbReference type="InterPro" id="IPR042201">
    <property type="entry name" value="FH2_Formin_sf"/>
</dbReference>
<dbReference type="InterPro" id="IPR010472">
    <property type="entry name" value="FH3_dom"/>
</dbReference>
<dbReference type="InterPro" id="IPR043592">
    <property type="entry name" value="FMNL_animal"/>
</dbReference>
<dbReference type="InterPro" id="IPR014768">
    <property type="entry name" value="GBD/FH3_dom"/>
</dbReference>
<dbReference type="InterPro" id="IPR010473">
    <property type="entry name" value="GTPase-bd"/>
</dbReference>
<dbReference type="PANTHER" id="PTHR45857">
    <property type="entry name" value="FORMIN-LIKE PROTEIN"/>
    <property type="match status" value="1"/>
</dbReference>
<dbReference type="PANTHER" id="PTHR45857:SF2">
    <property type="entry name" value="FORMIN-LIKE PROTEIN 1"/>
    <property type="match status" value="1"/>
</dbReference>
<dbReference type="Pfam" id="PF06367">
    <property type="entry name" value="Drf_FH3"/>
    <property type="match status" value="1"/>
</dbReference>
<dbReference type="Pfam" id="PF06371">
    <property type="entry name" value="Drf_GBD"/>
    <property type="match status" value="2"/>
</dbReference>
<dbReference type="Pfam" id="PF02181">
    <property type="entry name" value="FH2"/>
    <property type="match status" value="1"/>
</dbReference>
<dbReference type="SMART" id="SM01139">
    <property type="entry name" value="Drf_FH3"/>
    <property type="match status" value="1"/>
</dbReference>
<dbReference type="SMART" id="SM01140">
    <property type="entry name" value="Drf_GBD"/>
    <property type="match status" value="1"/>
</dbReference>
<dbReference type="SMART" id="SM00498">
    <property type="entry name" value="FH2"/>
    <property type="match status" value="1"/>
</dbReference>
<dbReference type="SUPFAM" id="SSF48371">
    <property type="entry name" value="ARM repeat"/>
    <property type="match status" value="1"/>
</dbReference>
<dbReference type="SUPFAM" id="SSF101447">
    <property type="entry name" value="Formin homology 2 domain (FH2 domain)"/>
    <property type="match status" value="1"/>
</dbReference>
<dbReference type="PROSITE" id="PS51231">
    <property type="entry name" value="DAD"/>
    <property type="match status" value="1"/>
</dbReference>
<dbReference type="PROSITE" id="PS51444">
    <property type="entry name" value="FH2"/>
    <property type="match status" value="1"/>
</dbReference>
<dbReference type="PROSITE" id="PS51232">
    <property type="entry name" value="GBD_FH3"/>
    <property type="match status" value="1"/>
</dbReference>